<evidence type="ECO:0000255" key="1">
    <source>
        <dbReference type="HAMAP-Rule" id="MF_00131"/>
    </source>
</evidence>
<organism>
    <name type="scientific">Pelobacter propionicus (strain DSM 2379 / NBRC 103807 / OttBd1)</name>
    <dbReference type="NCBI Taxonomy" id="338966"/>
    <lineage>
        <taxon>Bacteria</taxon>
        <taxon>Pseudomonadati</taxon>
        <taxon>Thermodesulfobacteriota</taxon>
        <taxon>Desulfuromonadia</taxon>
        <taxon>Desulfuromonadales</taxon>
        <taxon>Desulfuromonadaceae</taxon>
        <taxon>Pelobacter</taxon>
    </lineage>
</organism>
<feature type="chain" id="PRO_1000018245" description="Tryptophan synthase alpha chain">
    <location>
        <begin position="1"/>
        <end position="267"/>
    </location>
</feature>
<feature type="active site" description="Proton acceptor" evidence="1">
    <location>
        <position position="49"/>
    </location>
</feature>
<feature type="active site" description="Proton acceptor" evidence="1">
    <location>
        <position position="60"/>
    </location>
</feature>
<comment type="function">
    <text evidence="1">The alpha subunit is responsible for the aldol cleavage of indoleglycerol phosphate to indole and glyceraldehyde 3-phosphate.</text>
</comment>
<comment type="catalytic activity">
    <reaction evidence="1">
        <text>(1S,2R)-1-C-(indol-3-yl)glycerol 3-phosphate + L-serine = D-glyceraldehyde 3-phosphate + L-tryptophan + H2O</text>
        <dbReference type="Rhea" id="RHEA:10532"/>
        <dbReference type="ChEBI" id="CHEBI:15377"/>
        <dbReference type="ChEBI" id="CHEBI:33384"/>
        <dbReference type="ChEBI" id="CHEBI:57912"/>
        <dbReference type="ChEBI" id="CHEBI:58866"/>
        <dbReference type="ChEBI" id="CHEBI:59776"/>
        <dbReference type="EC" id="4.2.1.20"/>
    </reaction>
</comment>
<comment type="pathway">
    <text evidence="1">Amino-acid biosynthesis; L-tryptophan biosynthesis; L-tryptophan from chorismate: step 5/5.</text>
</comment>
<comment type="subunit">
    <text evidence="1">Tetramer of two alpha and two beta chains.</text>
</comment>
<comment type="similarity">
    <text evidence="1">Belongs to the TrpA family.</text>
</comment>
<accession>A1AN65</accession>
<reference key="1">
    <citation type="submission" date="2006-10" db="EMBL/GenBank/DDBJ databases">
        <title>Complete sequence of chromosome of Pelobacter propionicus DSM 2379.</title>
        <authorList>
            <consortium name="US DOE Joint Genome Institute"/>
            <person name="Copeland A."/>
            <person name="Lucas S."/>
            <person name="Lapidus A."/>
            <person name="Barry K."/>
            <person name="Detter J.C."/>
            <person name="Glavina del Rio T."/>
            <person name="Hammon N."/>
            <person name="Israni S."/>
            <person name="Dalin E."/>
            <person name="Tice H."/>
            <person name="Pitluck S."/>
            <person name="Saunders E."/>
            <person name="Brettin T."/>
            <person name="Bruce D."/>
            <person name="Han C."/>
            <person name="Tapia R."/>
            <person name="Schmutz J."/>
            <person name="Larimer F."/>
            <person name="Land M."/>
            <person name="Hauser L."/>
            <person name="Kyrpides N."/>
            <person name="Kim E."/>
            <person name="Lovley D."/>
            <person name="Richardson P."/>
        </authorList>
    </citation>
    <scope>NUCLEOTIDE SEQUENCE [LARGE SCALE GENOMIC DNA]</scope>
    <source>
        <strain>DSM 2379 / NBRC 103807 / OttBd1</strain>
    </source>
</reference>
<name>TRPA_PELPD</name>
<protein>
    <recommendedName>
        <fullName evidence="1">Tryptophan synthase alpha chain</fullName>
        <ecNumber evidence="1">4.2.1.20</ecNumber>
    </recommendedName>
</protein>
<gene>
    <name evidence="1" type="primary">trpA</name>
    <name type="ordered locus">Ppro_1162</name>
</gene>
<proteinExistence type="inferred from homology"/>
<sequence length="267" mass="28367">MNRLTHCFNELKQRNTKALVTFITAGDPDLATTQAMIPLLQQAGADIIELGMPFSDPMADGPTIQLSSERALAASTTLERILAMVRAVRRSCQVPIVLMGYLNPIHAYGYERFANDAAEAGVDGVLVVDMPPEEAESFLNHANARDLQVAFLLTPTSTDSRIATVGRLGRGFVYYVTVTGVTGARQQVSTTLGGELAKVRAKISVPIVAGFGISTPQQAADVAAMADGVVVGSALVKLFQLHSGEELRQEVTRFVASLRQAIPGGAA</sequence>
<dbReference type="EC" id="4.2.1.20" evidence="1"/>
<dbReference type="EMBL" id="CP000482">
    <property type="protein sequence ID" value="ABK98785.1"/>
    <property type="molecule type" value="Genomic_DNA"/>
</dbReference>
<dbReference type="RefSeq" id="WP_011735087.1">
    <property type="nucleotide sequence ID" value="NC_008609.1"/>
</dbReference>
<dbReference type="SMR" id="A1AN65"/>
<dbReference type="STRING" id="338966.Ppro_1162"/>
<dbReference type="KEGG" id="ppd:Ppro_1162"/>
<dbReference type="eggNOG" id="COG0159">
    <property type="taxonomic scope" value="Bacteria"/>
</dbReference>
<dbReference type="HOGENOM" id="CLU_016734_0_4_7"/>
<dbReference type="OrthoDB" id="9804578at2"/>
<dbReference type="UniPathway" id="UPA00035">
    <property type="reaction ID" value="UER00044"/>
</dbReference>
<dbReference type="Proteomes" id="UP000006732">
    <property type="component" value="Chromosome"/>
</dbReference>
<dbReference type="GO" id="GO:0005829">
    <property type="term" value="C:cytosol"/>
    <property type="evidence" value="ECO:0007669"/>
    <property type="project" value="TreeGrafter"/>
</dbReference>
<dbReference type="GO" id="GO:0004834">
    <property type="term" value="F:tryptophan synthase activity"/>
    <property type="evidence" value="ECO:0007669"/>
    <property type="project" value="UniProtKB-UniRule"/>
</dbReference>
<dbReference type="CDD" id="cd04724">
    <property type="entry name" value="Tryptophan_synthase_alpha"/>
    <property type="match status" value="1"/>
</dbReference>
<dbReference type="FunFam" id="3.20.20.70:FF:000037">
    <property type="entry name" value="Tryptophan synthase alpha chain"/>
    <property type="match status" value="1"/>
</dbReference>
<dbReference type="Gene3D" id="3.20.20.70">
    <property type="entry name" value="Aldolase class I"/>
    <property type="match status" value="1"/>
</dbReference>
<dbReference type="HAMAP" id="MF_00131">
    <property type="entry name" value="Trp_synth_alpha"/>
    <property type="match status" value="1"/>
</dbReference>
<dbReference type="InterPro" id="IPR013785">
    <property type="entry name" value="Aldolase_TIM"/>
</dbReference>
<dbReference type="InterPro" id="IPR011060">
    <property type="entry name" value="RibuloseP-bd_barrel"/>
</dbReference>
<dbReference type="InterPro" id="IPR018204">
    <property type="entry name" value="Trp_synthase_alpha_AS"/>
</dbReference>
<dbReference type="InterPro" id="IPR002028">
    <property type="entry name" value="Trp_synthase_suA"/>
</dbReference>
<dbReference type="NCBIfam" id="TIGR00262">
    <property type="entry name" value="trpA"/>
    <property type="match status" value="1"/>
</dbReference>
<dbReference type="PANTHER" id="PTHR43406:SF1">
    <property type="entry name" value="TRYPTOPHAN SYNTHASE ALPHA CHAIN, CHLOROPLASTIC"/>
    <property type="match status" value="1"/>
</dbReference>
<dbReference type="PANTHER" id="PTHR43406">
    <property type="entry name" value="TRYPTOPHAN SYNTHASE, ALPHA CHAIN"/>
    <property type="match status" value="1"/>
</dbReference>
<dbReference type="Pfam" id="PF00290">
    <property type="entry name" value="Trp_syntA"/>
    <property type="match status" value="1"/>
</dbReference>
<dbReference type="SUPFAM" id="SSF51366">
    <property type="entry name" value="Ribulose-phoshate binding barrel"/>
    <property type="match status" value="1"/>
</dbReference>
<dbReference type="PROSITE" id="PS00167">
    <property type="entry name" value="TRP_SYNTHASE_ALPHA"/>
    <property type="match status" value="1"/>
</dbReference>
<keyword id="KW-0028">Amino-acid biosynthesis</keyword>
<keyword id="KW-0057">Aromatic amino acid biosynthesis</keyword>
<keyword id="KW-0456">Lyase</keyword>
<keyword id="KW-1185">Reference proteome</keyword>
<keyword id="KW-0822">Tryptophan biosynthesis</keyword>